<protein>
    <recommendedName>
        <fullName>Floral homeotic protein APETALA 1-2</fullName>
        <shortName>Boi2AP1</shortName>
    </recommendedName>
    <alternativeName>
        <fullName>Agamous-like MADS-box protein 2AP1</fullName>
    </alternativeName>
</protein>
<sequence length="256" mass="30171">MGRGRVQLKRIENKINRQVTFSKRRAGLMKKAHEISVLCDAEVALVVFSHKGKLFEYSTDSCMEKILERYERYSYAERQLIAPESDSNTNWSMEYNRLKAKIELLERNQRHYLGEDLQAMSPKELQNLEQQLDTALKHIRSRKNQLMYDSINELQRKEKAIQEQNSMLSKQIKERENVLRAQQEQWDEQNHGHNMPPPPPPQQHQIQHPYMLSHQPSPFLNMGGLYQEEDQMAMRRNDLDLSLEPVYNCNLGCFAA</sequence>
<name>2AP1_BRAOT</name>
<accession>Q96356</accession>
<reference key="1">
    <citation type="journal article" date="1997" name="Planta">
        <title>Floral homeotic gene expression defines developmental arrest stages in Brassica oleracea L. vars. botrytis and italica.</title>
        <authorList>
            <person name="Carr S.M."/>
            <person name="Irish V.F."/>
        </authorList>
    </citation>
    <scope>NUCLEOTIDE SEQUENCE [MRNA]</scope>
    <source>
        <tissue>Flower</tissue>
    </source>
</reference>
<comment type="function">
    <text evidence="1">Transcription factor that promotes early floral meristem identity in synergy with LEAFY. Displays a redundant function with CAULIFLOWER in the up-regulation of LEAFY. Required subsequently for the transition of an inflorescence meristem into a floral meristem, and for the normal development of sepals and petals in flowers. Regulates positively B class homeotic proteins (By similarity).</text>
</comment>
<comment type="subunit">
    <text evidence="1">Homodimer capable of binding to CArG-box sequences.</text>
</comment>
<comment type="subcellular location">
    <subcellularLocation>
        <location evidence="2">Nucleus</location>
    </subcellularLocation>
</comment>
<feature type="chain" id="PRO_0000417136" description="Floral homeotic protein APETALA 1-2">
    <location>
        <begin position="1"/>
        <end position="256"/>
    </location>
</feature>
<feature type="domain" description="MADS-box" evidence="2">
    <location>
        <begin position="1"/>
        <end position="61"/>
    </location>
</feature>
<feature type="domain" description="K-box" evidence="3">
    <location>
        <begin position="88"/>
        <end position="178"/>
    </location>
</feature>
<feature type="region of interest" description="Disordered" evidence="4">
    <location>
        <begin position="187"/>
        <end position="206"/>
    </location>
</feature>
<gene>
    <name type="primary">2AP1</name>
</gene>
<organism>
    <name type="scientific">Brassica oleracea var. italica</name>
    <name type="common">Broccoli</name>
    <dbReference type="NCBI Taxonomy" id="36774"/>
    <lineage>
        <taxon>Eukaryota</taxon>
        <taxon>Viridiplantae</taxon>
        <taxon>Streptophyta</taxon>
        <taxon>Embryophyta</taxon>
        <taxon>Tracheophyta</taxon>
        <taxon>Spermatophyta</taxon>
        <taxon>Magnoliopsida</taxon>
        <taxon>eudicotyledons</taxon>
        <taxon>Gunneridae</taxon>
        <taxon>Pentapetalae</taxon>
        <taxon>rosids</taxon>
        <taxon>malvids</taxon>
        <taxon>Brassicales</taxon>
        <taxon>Brassicaceae</taxon>
        <taxon>Brassiceae</taxon>
        <taxon>Brassica</taxon>
    </lineage>
</organism>
<keyword id="KW-0010">Activator</keyword>
<keyword id="KW-0175">Coiled coil</keyword>
<keyword id="KW-0217">Developmental protein</keyword>
<keyword id="KW-0221">Differentiation</keyword>
<keyword id="KW-0238">DNA-binding</keyword>
<keyword id="KW-0287">Flowering</keyword>
<keyword id="KW-0539">Nucleus</keyword>
<keyword id="KW-0804">Transcription</keyword>
<keyword id="KW-0805">Transcription regulation</keyword>
<evidence type="ECO:0000250" key="1"/>
<evidence type="ECO:0000255" key="2">
    <source>
        <dbReference type="PROSITE-ProRule" id="PRU00251"/>
    </source>
</evidence>
<evidence type="ECO:0000255" key="3">
    <source>
        <dbReference type="PROSITE-ProRule" id="PRU00629"/>
    </source>
</evidence>
<evidence type="ECO:0000256" key="4">
    <source>
        <dbReference type="SAM" id="MobiDB-lite"/>
    </source>
</evidence>
<dbReference type="EMBL" id="U67452">
    <property type="protein sequence ID" value="AAB08876.1"/>
    <property type="molecule type" value="mRNA"/>
</dbReference>
<dbReference type="SMR" id="Q96356"/>
<dbReference type="GO" id="GO:0005634">
    <property type="term" value="C:nucleus"/>
    <property type="evidence" value="ECO:0007669"/>
    <property type="project" value="UniProtKB-SubCell"/>
</dbReference>
<dbReference type="GO" id="GO:0003700">
    <property type="term" value="F:DNA-binding transcription factor activity"/>
    <property type="evidence" value="ECO:0007669"/>
    <property type="project" value="InterPro"/>
</dbReference>
<dbReference type="GO" id="GO:0046983">
    <property type="term" value="F:protein dimerization activity"/>
    <property type="evidence" value="ECO:0007669"/>
    <property type="project" value="InterPro"/>
</dbReference>
<dbReference type="GO" id="GO:0000977">
    <property type="term" value="F:RNA polymerase II transcription regulatory region sequence-specific DNA binding"/>
    <property type="evidence" value="ECO:0007669"/>
    <property type="project" value="InterPro"/>
</dbReference>
<dbReference type="GO" id="GO:0030154">
    <property type="term" value="P:cell differentiation"/>
    <property type="evidence" value="ECO:0007669"/>
    <property type="project" value="UniProtKB-KW"/>
</dbReference>
<dbReference type="GO" id="GO:0009908">
    <property type="term" value="P:flower development"/>
    <property type="evidence" value="ECO:0007669"/>
    <property type="project" value="UniProtKB-KW"/>
</dbReference>
<dbReference type="GO" id="GO:0045944">
    <property type="term" value="P:positive regulation of transcription by RNA polymerase II"/>
    <property type="evidence" value="ECO:0007669"/>
    <property type="project" value="InterPro"/>
</dbReference>
<dbReference type="CDD" id="cd00265">
    <property type="entry name" value="MADS_MEF2_like"/>
    <property type="match status" value="1"/>
</dbReference>
<dbReference type="FunFam" id="3.40.1810.10:FF:000003">
    <property type="entry name" value="MADS-box transcription factor MADS-MC"/>
    <property type="match status" value="1"/>
</dbReference>
<dbReference type="Gene3D" id="3.40.1810.10">
    <property type="entry name" value="Transcription factor, MADS-box"/>
    <property type="match status" value="1"/>
</dbReference>
<dbReference type="InterPro" id="IPR050142">
    <property type="entry name" value="MADS-box/MEF2_TF"/>
</dbReference>
<dbReference type="InterPro" id="IPR033896">
    <property type="entry name" value="MEF2-like_N"/>
</dbReference>
<dbReference type="InterPro" id="IPR002487">
    <property type="entry name" value="TF_Kbox"/>
</dbReference>
<dbReference type="InterPro" id="IPR002100">
    <property type="entry name" value="TF_MADSbox"/>
</dbReference>
<dbReference type="InterPro" id="IPR036879">
    <property type="entry name" value="TF_MADSbox_sf"/>
</dbReference>
<dbReference type="PANTHER" id="PTHR48019">
    <property type="entry name" value="SERUM RESPONSE FACTOR HOMOLOG"/>
    <property type="match status" value="1"/>
</dbReference>
<dbReference type="Pfam" id="PF01486">
    <property type="entry name" value="K-box"/>
    <property type="match status" value="1"/>
</dbReference>
<dbReference type="Pfam" id="PF00319">
    <property type="entry name" value="SRF-TF"/>
    <property type="match status" value="1"/>
</dbReference>
<dbReference type="PRINTS" id="PR00404">
    <property type="entry name" value="MADSDOMAIN"/>
</dbReference>
<dbReference type="SMART" id="SM00432">
    <property type="entry name" value="MADS"/>
    <property type="match status" value="1"/>
</dbReference>
<dbReference type="SUPFAM" id="SSF55455">
    <property type="entry name" value="SRF-like"/>
    <property type="match status" value="1"/>
</dbReference>
<dbReference type="PROSITE" id="PS51297">
    <property type="entry name" value="K_BOX"/>
    <property type="match status" value="1"/>
</dbReference>
<dbReference type="PROSITE" id="PS00350">
    <property type="entry name" value="MADS_BOX_1"/>
    <property type="match status" value="1"/>
</dbReference>
<dbReference type="PROSITE" id="PS50066">
    <property type="entry name" value="MADS_BOX_2"/>
    <property type="match status" value="1"/>
</dbReference>
<proteinExistence type="evidence at transcript level"/>